<protein>
    <recommendedName>
        <fullName evidence="1">Ribosomal RNA large subunit methyltransferase H</fullName>
        <ecNumber evidence="1">2.1.1.177</ecNumber>
    </recommendedName>
    <alternativeName>
        <fullName evidence="1">23S rRNA (pseudouridine1915-N3)-methyltransferase</fullName>
    </alternativeName>
    <alternativeName>
        <fullName evidence="1">23S rRNA m3Psi1915 methyltransferase</fullName>
    </alternativeName>
    <alternativeName>
        <fullName evidence="1">rRNA (pseudouridine-N3-)-methyltransferase RlmH</fullName>
    </alternativeName>
</protein>
<name>RLMH_STAAN</name>
<gene>
    <name evidence="1" type="primary">rlmH</name>
    <name type="ordered locus">SA0023</name>
</gene>
<feature type="chain" id="PRO_0000198178" description="Ribosomal RNA large subunit methyltransferase H">
    <location>
        <begin position="1"/>
        <end position="159"/>
    </location>
</feature>
<feature type="binding site" evidence="1">
    <location>
        <position position="76"/>
    </location>
    <ligand>
        <name>S-adenosyl-L-methionine</name>
        <dbReference type="ChEBI" id="CHEBI:59789"/>
    </ligand>
</feature>
<feature type="binding site" evidence="1">
    <location>
        <position position="108"/>
    </location>
    <ligand>
        <name>S-adenosyl-L-methionine</name>
        <dbReference type="ChEBI" id="CHEBI:59789"/>
    </ligand>
</feature>
<feature type="binding site" evidence="1">
    <location>
        <begin position="127"/>
        <end position="132"/>
    </location>
    <ligand>
        <name>S-adenosyl-L-methionine</name>
        <dbReference type="ChEBI" id="CHEBI:59789"/>
    </ligand>
</feature>
<organism>
    <name type="scientific">Staphylococcus aureus (strain N315)</name>
    <dbReference type="NCBI Taxonomy" id="158879"/>
    <lineage>
        <taxon>Bacteria</taxon>
        <taxon>Bacillati</taxon>
        <taxon>Bacillota</taxon>
        <taxon>Bacilli</taxon>
        <taxon>Bacillales</taxon>
        <taxon>Staphylococcaceae</taxon>
        <taxon>Staphylococcus</taxon>
    </lineage>
</organism>
<dbReference type="EC" id="2.1.1.177" evidence="1"/>
<dbReference type="EMBL" id="BA000018">
    <property type="protein sequence ID" value="BAB41240.1"/>
    <property type="molecule type" value="Genomic_DNA"/>
</dbReference>
<dbReference type="PIR" id="H89760">
    <property type="entry name" value="H89760"/>
</dbReference>
<dbReference type="RefSeq" id="WP_000704775.1">
    <property type="nucleotide sequence ID" value="NC_002745.2"/>
</dbReference>
<dbReference type="SMR" id="P0A0N7"/>
<dbReference type="EnsemblBacteria" id="BAB41240">
    <property type="protein sequence ID" value="BAB41240"/>
    <property type="gene ID" value="BAB41240"/>
</dbReference>
<dbReference type="GeneID" id="98344407"/>
<dbReference type="KEGG" id="sau:SA0023"/>
<dbReference type="HOGENOM" id="CLU_100552_0_0_9"/>
<dbReference type="GO" id="GO:0005737">
    <property type="term" value="C:cytoplasm"/>
    <property type="evidence" value="ECO:0007669"/>
    <property type="project" value="UniProtKB-SubCell"/>
</dbReference>
<dbReference type="GO" id="GO:0070038">
    <property type="term" value="F:rRNA (pseudouridine-N3-)-methyltransferase activity"/>
    <property type="evidence" value="ECO:0007669"/>
    <property type="project" value="UniProtKB-UniRule"/>
</dbReference>
<dbReference type="CDD" id="cd18081">
    <property type="entry name" value="RlmH-like"/>
    <property type="match status" value="1"/>
</dbReference>
<dbReference type="Gene3D" id="3.40.1280.10">
    <property type="match status" value="1"/>
</dbReference>
<dbReference type="HAMAP" id="MF_00658">
    <property type="entry name" value="23SrRNA_methyltr_H"/>
    <property type="match status" value="1"/>
</dbReference>
<dbReference type="InterPro" id="IPR029028">
    <property type="entry name" value="Alpha/beta_knot_MTases"/>
</dbReference>
<dbReference type="InterPro" id="IPR003742">
    <property type="entry name" value="RlmH-like"/>
</dbReference>
<dbReference type="InterPro" id="IPR029026">
    <property type="entry name" value="tRNA_m1G_MTases_N"/>
</dbReference>
<dbReference type="NCBIfam" id="NF000985">
    <property type="entry name" value="PRK00103.1-3"/>
    <property type="match status" value="1"/>
</dbReference>
<dbReference type="NCBIfam" id="NF000986">
    <property type="entry name" value="PRK00103.1-4"/>
    <property type="match status" value="1"/>
</dbReference>
<dbReference type="NCBIfam" id="TIGR00246">
    <property type="entry name" value="tRNA_RlmH_YbeA"/>
    <property type="match status" value="1"/>
</dbReference>
<dbReference type="PANTHER" id="PTHR33603">
    <property type="entry name" value="METHYLTRANSFERASE"/>
    <property type="match status" value="1"/>
</dbReference>
<dbReference type="PANTHER" id="PTHR33603:SF1">
    <property type="entry name" value="RIBOSOMAL RNA LARGE SUBUNIT METHYLTRANSFERASE H"/>
    <property type="match status" value="1"/>
</dbReference>
<dbReference type="Pfam" id="PF02590">
    <property type="entry name" value="SPOUT_MTase"/>
    <property type="match status" value="1"/>
</dbReference>
<dbReference type="PIRSF" id="PIRSF004505">
    <property type="entry name" value="MT_bac"/>
    <property type="match status" value="1"/>
</dbReference>
<dbReference type="SUPFAM" id="SSF75217">
    <property type="entry name" value="alpha/beta knot"/>
    <property type="match status" value="1"/>
</dbReference>
<accession>P0A0N7</accession>
<accession>Q9WVW7</accession>
<comment type="function">
    <text evidence="1">Specifically methylates the pseudouridine at position 1915 (m3Psi1915) in 23S rRNA.</text>
</comment>
<comment type="catalytic activity">
    <reaction evidence="1">
        <text>pseudouridine(1915) in 23S rRNA + S-adenosyl-L-methionine = N(3)-methylpseudouridine(1915) in 23S rRNA + S-adenosyl-L-homocysteine + H(+)</text>
        <dbReference type="Rhea" id="RHEA:42752"/>
        <dbReference type="Rhea" id="RHEA-COMP:10221"/>
        <dbReference type="Rhea" id="RHEA-COMP:10222"/>
        <dbReference type="ChEBI" id="CHEBI:15378"/>
        <dbReference type="ChEBI" id="CHEBI:57856"/>
        <dbReference type="ChEBI" id="CHEBI:59789"/>
        <dbReference type="ChEBI" id="CHEBI:65314"/>
        <dbReference type="ChEBI" id="CHEBI:74486"/>
        <dbReference type="EC" id="2.1.1.177"/>
    </reaction>
</comment>
<comment type="subunit">
    <text evidence="1">Homodimer.</text>
</comment>
<comment type="subcellular location">
    <subcellularLocation>
        <location evidence="1">Cytoplasm</location>
    </subcellularLocation>
</comment>
<comment type="similarity">
    <text evidence="1">Belongs to the RNA methyltransferase RlmH family.</text>
</comment>
<keyword id="KW-0963">Cytoplasm</keyword>
<keyword id="KW-0489">Methyltransferase</keyword>
<keyword id="KW-0698">rRNA processing</keyword>
<keyword id="KW-0949">S-adenosyl-L-methionine</keyword>
<keyword id="KW-0808">Transferase</keyword>
<reference key="1">
    <citation type="journal article" date="2001" name="Lancet">
        <title>Whole genome sequencing of meticillin-resistant Staphylococcus aureus.</title>
        <authorList>
            <person name="Kuroda M."/>
            <person name="Ohta T."/>
            <person name="Uchiyama I."/>
            <person name="Baba T."/>
            <person name="Yuzawa H."/>
            <person name="Kobayashi I."/>
            <person name="Cui L."/>
            <person name="Oguchi A."/>
            <person name="Aoki K."/>
            <person name="Nagai Y."/>
            <person name="Lian J.-Q."/>
            <person name="Ito T."/>
            <person name="Kanamori M."/>
            <person name="Matsumaru H."/>
            <person name="Maruyama A."/>
            <person name="Murakami H."/>
            <person name="Hosoyama A."/>
            <person name="Mizutani-Ui Y."/>
            <person name="Takahashi N.K."/>
            <person name="Sawano T."/>
            <person name="Inoue R."/>
            <person name="Kaito C."/>
            <person name="Sekimizu K."/>
            <person name="Hirakawa H."/>
            <person name="Kuhara S."/>
            <person name="Goto S."/>
            <person name="Yabuzaki J."/>
            <person name="Kanehisa M."/>
            <person name="Yamashita A."/>
            <person name="Oshima K."/>
            <person name="Furuya K."/>
            <person name="Yoshino C."/>
            <person name="Shiba T."/>
            <person name="Hattori M."/>
            <person name="Ogasawara N."/>
            <person name="Hayashi H."/>
            <person name="Hiramatsu K."/>
        </authorList>
    </citation>
    <scope>NUCLEOTIDE SEQUENCE [LARGE SCALE GENOMIC DNA]</scope>
    <source>
        <strain>N315</strain>
    </source>
</reference>
<evidence type="ECO:0000255" key="1">
    <source>
        <dbReference type="HAMAP-Rule" id="MF_00658"/>
    </source>
</evidence>
<sequence>MKITILAVGKLKEKYWKQAIAEYEKRLGPYTKIDIIEVPDEKAPENMSDKEIEQVKEKEGQRILAKIKPQSTVITLEIQGKMLSSEGLAQELNQRMTQGQSDFVFVIGGSNGLHKDVLQRSNYALSFSKMTFPHQMMRVVLIEQVYRAFKIMRGEAYHK</sequence>
<proteinExistence type="inferred from homology"/>